<name>NDK_PSEE4</name>
<comment type="function">
    <text evidence="1">Major role in the synthesis of nucleoside triphosphates other than ATP. The ATP gamma phosphate is transferred to the NDP beta phosphate via a ping-pong mechanism, using a phosphorylated active-site intermediate.</text>
</comment>
<comment type="catalytic activity">
    <reaction evidence="1">
        <text>a 2'-deoxyribonucleoside 5'-diphosphate + ATP = a 2'-deoxyribonucleoside 5'-triphosphate + ADP</text>
        <dbReference type="Rhea" id="RHEA:44640"/>
        <dbReference type="ChEBI" id="CHEBI:30616"/>
        <dbReference type="ChEBI" id="CHEBI:61560"/>
        <dbReference type="ChEBI" id="CHEBI:73316"/>
        <dbReference type="ChEBI" id="CHEBI:456216"/>
        <dbReference type="EC" id="2.7.4.6"/>
    </reaction>
</comment>
<comment type="catalytic activity">
    <reaction evidence="1">
        <text>a ribonucleoside 5'-diphosphate + ATP = a ribonucleoside 5'-triphosphate + ADP</text>
        <dbReference type="Rhea" id="RHEA:18113"/>
        <dbReference type="ChEBI" id="CHEBI:30616"/>
        <dbReference type="ChEBI" id="CHEBI:57930"/>
        <dbReference type="ChEBI" id="CHEBI:61557"/>
        <dbReference type="ChEBI" id="CHEBI:456216"/>
        <dbReference type="EC" id="2.7.4.6"/>
    </reaction>
</comment>
<comment type="cofactor">
    <cofactor evidence="1">
        <name>Mg(2+)</name>
        <dbReference type="ChEBI" id="CHEBI:18420"/>
    </cofactor>
</comment>
<comment type="subunit">
    <text evidence="1">Homotetramer.</text>
</comment>
<comment type="subcellular location">
    <subcellularLocation>
        <location evidence="1">Cytoplasm</location>
    </subcellularLocation>
</comment>
<comment type="similarity">
    <text evidence="1">Belongs to the NDK family.</text>
</comment>
<dbReference type="EC" id="2.7.4.6" evidence="1"/>
<dbReference type="EMBL" id="CT573326">
    <property type="protein sequence ID" value="CAK13920.1"/>
    <property type="molecule type" value="Genomic_DNA"/>
</dbReference>
<dbReference type="RefSeq" id="WP_011532343.1">
    <property type="nucleotide sequence ID" value="NC_008027.1"/>
</dbReference>
<dbReference type="SMR" id="Q1IEI5"/>
<dbReference type="STRING" id="384676.PSEEN1017"/>
<dbReference type="GeneID" id="90538560"/>
<dbReference type="KEGG" id="pen:PSEEN1017"/>
<dbReference type="eggNOG" id="COG0105">
    <property type="taxonomic scope" value="Bacteria"/>
</dbReference>
<dbReference type="HOGENOM" id="CLU_060216_8_1_6"/>
<dbReference type="OrthoDB" id="9801161at2"/>
<dbReference type="Proteomes" id="UP000000658">
    <property type="component" value="Chromosome"/>
</dbReference>
<dbReference type="GO" id="GO:0005737">
    <property type="term" value="C:cytoplasm"/>
    <property type="evidence" value="ECO:0007669"/>
    <property type="project" value="UniProtKB-SubCell"/>
</dbReference>
<dbReference type="GO" id="GO:0005524">
    <property type="term" value="F:ATP binding"/>
    <property type="evidence" value="ECO:0007669"/>
    <property type="project" value="UniProtKB-UniRule"/>
</dbReference>
<dbReference type="GO" id="GO:0046872">
    <property type="term" value="F:metal ion binding"/>
    <property type="evidence" value="ECO:0007669"/>
    <property type="project" value="UniProtKB-KW"/>
</dbReference>
<dbReference type="GO" id="GO:0004550">
    <property type="term" value="F:nucleoside diphosphate kinase activity"/>
    <property type="evidence" value="ECO:0007669"/>
    <property type="project" value="UniProtKB-UniRule"/>
</dbReference>
<dbReference type="GO" id="GO:0006241">
    <property type="term" value="P:CTP biosynthetic process"/>
    <property type="evidence" value="ECO:0007669"/>
    <property type="project" value="UniProtKB-UniRule"/>
</dbReference>
<dbReference type="GO" id="GO:0006183">
    <property type="term" value="P:GTP biosynthetic process"/>
    <property type="evidence" value="ECO:0007669"/>
    <property type="project" value="UniProtKB-UniRule"/>
</dbReference>
<dbReference type="GO" id="GO:0006228">
    <property type="term" value="P:UTP biosynthetic process"/>
    <property type="evidence" value="ECO:0007669"/>
    <property type="project" value="UniProtKB-UniRule"/>
</dbReference>
<dbReference type="CDD" id="cd04413">
    <property type="entry name" value="NDPk_I"/>
    <property type="match status" value="1"/>
</dbReference>
<dbReference type="FunFam" id="3.30.70.141:FF:000001">
    <property type="entry name" value="Nucleoside diphosphate kinase"/>
    <property type="match status" value="1"/>
</dbReference>
<dbReference type="Gene3D" id="3.30.70.141">
    <property type="entry name" value="Nucleoside diphosphate kinase-like domain"/>
    <property type="match status" value="1"/>
</dbReference>
<dbReference type="HAMAP" id="MF_00451">
    <property type="entry name" value="NDP_kinase"/>
    <property type="match status" value="1"/>
</dbReference>
<dbReference type="InterPro" id="IPR034907">
    <property type="entry name" value="NDK-like_dom"/>
</dbReference>
<dbReference type="InterPro" id="IPR036850">
    <property type="entry name" value="NDK-like_dom_sf"/>
</dbReference>
<dbReference type="InterPro" id="IPR001564">
    <property type="entry name" value="Nucleoside_diP_kinase"/>
</dbReference>
<dbReference type="InterPro" id="IPR023005">
    <property type="entry name" value="Nucleoside_diP_kinase_AS"/>
</dbReference>
<dbReference type="NCBIfam" id="NF001908">
    <property type="entry name" value="PRK00668.1"/>
    <property type="match status" value="1"/>
</dbReference>
<dbReference type="PANTHER" id="PTHR46161">
    <property type="entry name" value="NUCLEOSIDE DIPHOSPHATE KINASE"/>
    <property type="match status" value="1"/>
</dbReference>
<dbReference type="PANTHER" id="PTHR46161:SF3">
    <property type="entry name" value="NUCLEOSIDE DIPHOSPHATE KINASE DDB_G0292928-RELATED"/>
    <property type="match status" value="1"/>
</dbReference>
<dbReference type="Pfam" id="PF00334">
    <property type="entry name" value="NDK"/>
    <property type="match status" value="1"/>
</dbReference>
<dbReference type="PRINTS" id="PR01243">
    <property type="entry name" value="NUCDPKINASE"/>
</dbReference>
<dbReference type="SMART" id="SM00562">
    <property type="entry name" value="NDK"/>
    <property type="match status" value="1"/>
</dbReference>
<dbReference type="SUPFAM" id="SSF54919">
    <property type="entry name" value="Nucleoside diphosphate kinase, NDK"/>
    <property type="match status" value="1"/>
</dbReference>
<dbReference type="PROSITE" id="PS00469">
    <property type="entry name" value="NDPK"/>
    <property type="match status" value="1"/>
</dbReference>
<dbReference type="PROSITE" id="PS51374">
    <property type="entry name" value="NDPK_LIKE"/>
    <property type="match status" value="1"/>
</dbReference>
<accession>Q1IEI5</accession>
<reference key="1">
    <citation type="journal article" date="2006" name="Nat. Biotechnol.">
        <title>Complete genome sequence of the entomopathogenic and metabolically versatile soil bacterium Pseudomonas entomophila.</title>
        <authorList>
            <person name="Vodovar N."/>
            <person name="Vallenet D."/>
            <person name="Cruveiller S."/>
            <person name="Rouy Z."/>
            <person name="Barbe V."/>
            <person name="Acosta C."/>
            <person name="Cattolico L."/>
            <person name="Jubin C."/>
            <person name="Lajus A."/>
            <person name="Segurens B."/>
            <person name="Vacherie B."/>
            <person name="Wincker P."/>
            <person name="Weissenbach J."/>
            <person name="Lemaitre B."/>
            <person name="Medigue C."/>
            <person name="Boccard F."/>
        </authorList>
    </citation>
    <scope>NUCLEOTIDE SEQUENCE [LARGE SCALE GENOMIC DNA]</scope>
    <source>
        <strain>L48</strain>
    </source>
</reference>
<feature type="chain" id="PRO_1000026276" description="Nucleoside diphosphate kinase">
    <location>
        <begin position="1"/>
        <end position="141"/>
    </location>
</feature>
<feature type="active site" description="Pros-phosphohistidine intermediate" evidence="1">
    <location>
        <position position="117"/>
    </location>
</feature>
<feature type="binding site" evidence="1">
    <location>
        <position position="11"/>
    </location>
    <ligand>
        <name>ATP</name>
        <dbReference type="ChEBI" id="CHEBI:30616"/>
    </ligand>
</feature>
<feature type="binding site" evidence="1">
    <location>
        <position position="59"/>
    </location>
    <ligand>
        <name>ATP</name>
        <dbReference type="ChEBI" id="CHEBI:30616"/>
    </ligand>
</feature>
<feature type="binding site" evidence="1">
    <location>
        <position position="87"/>
    </location>
    <ligand>
        <name>ATP</name>
        <dbReference type="ChEBI" id="CHEBI:30616"/>
    </ligand>
</feature>
<feature type="binding site" evidence="1">
    <location>
        <position position="93"/>
    </location>
    <ligand>
        <name>ATP</name>
        <dbReference type="ChEBI" id="CHEBI:30616"/>
    </ligand>
</feature>
<feature type="binding site" evidence="1">
    <location>
        <position position="104"/>
    </location>
    <ligand>
        <name>ATP</name>
        <dbReference type="ChEBI" id="CHEBI:30616"/>
    </ligand>
</feature>
<feature type="binding site" evidence="1">
    <location>
        <position position="114"/>
    </location>
    <ligand>
        <name>ATP</name>
        <dbReference type="ChEBI" id="CHEBI:30616"/>
    </ligand>
</feature>
<evidence type="ECO:0000255" key="1">
    <source>
        <dbReference type="HAMAP-Rule" id="MF_00451"/>
    </source>
</evidence>
<gene>
    <name evidence="1" type="primary">ndk</name>
    <name type="ordered locus">PSEEN1017</name>
</gene>
<sequence>MAVQRTFSIIKPDAVAKNVIGKITTRFEEAGLKIVASKIKQLSKAEAEGFYAEHSARGFFGDLVAFMTSGPVVVQVLEGENAIALNRELMGATNPKEAAPGTIRADFAESIDANAVHGSDSEAAAAREIAYFFAATEVTTR</sequence>
<protein>
    <recommendedName>
        <fullName evidence="1">Nucleoside diphosphate kinase</fullName>
        <shortName evidence="1">NDK</shortName>
        <shortName evidence="1">NDP kinase</shortName>
        <ecNumber evidence="1">2.7.4.6</ecNumber>
    </recommendedName>
    <alternativeName>
        <fullName evidence="1">Nucleoside-2-P kinase</fullName>
    </alternativeName>
</protein>
<organism>
    <name type="scientific">Pseudomonas entomophila (strain L48)</name>
    <dbReference type="NCBI Taxonomy" id="384676"/>
    <lineage>
        <taxon>Bacteria</taxon>
        <taxon>Pseudomonadati</taxon>
        <taxon>Pseudomonadota</taxon>
        <taxon>Gammaproteobacteria</taxon>
        <taxon>Pseudomonadales</taxon>
        <taxon>Pseudomonadaceae</taxon>
        <taxon>Pseudomonas</taxon>
    </lineage>
</organism>
<proteinExistence type="inferred from homology"/>
<keyword id="KW-0067">ATP-binding</keyword>
<keyword id="KW-0963">Cytoplasm</keyword>
<keyword id="KW-0418">Kinase</keyword>
<keyword id="KW-0460">Magnesium</keyword>
<keyword id="KW-0479">Metal-binding</keyword>
<keyword id="KW-0546">Nucleotide metabolism</keyword>
<keyword id="KW-0547">Nucleotide-binding</keyword>
<keyword id="KW-0597">Phosphoprotein</keyword>
<keyword id="KW-0808">Transferase</keyword>